<feature type="chain" id="PRO_0000114124" description="Chromosomal replication initiator protein DnaA">
    <location>
        <begin position="1"/>
        <end position="446"/>
    </location>
</feature>
<feature type="region of interest" description="Domain I, interacts with DnaA modulators" evidence="1">
    <location>
        <begin position="1"/>
        <end position="92"/>
    </location>
</feature>
<feature type="region of interest" description="Domain II" evidence="1">
    <location>
        <begin position="93"/>
        <end position="109"/>
    </location>
</feature>
<feature type="region of interest" description="Domain III, AAA+ region" evidence="1">
    <location>
        <begin position="110"/>
        <end position="326"/>
    </location>
</feature>
<feature type="region of interest" description="Domain IV, binds dsDNA" evidence="1">
    <location>
        <begin position="327"/>
        <end position="446"/>
    </location>
</feature>
<feature type="binding site" evidence="1">
    <location>
        <position position="154"/>
    </location>
    <ligand>
        <name>ATP</name>
        <dbReference type="ChEBI" id="CHEBI:30616"/>
    </ligand>
</feature>
<feature type="binding site" evidence="1">
    <location>
        <position position="156"/>
    </location>
    <ligand>
        <name>ATP</name>
        <dbReference type="ChEBI" id="CHEBI:30616"/>
    </ligand>
</feature>
<feature type="binding site" evidence="1">
    <location>
        <position position="157"/>
    </location>
    <ligand>
        <name>ATP</name>
        <dbReference type="ChEBI" id="CHEBI:30616"/>
    </ligand>
</feature>
<feature type="binding site" evidence="1">
    <location>
        <position position="158"/>
    </location>
    <ligand>
        <name>ATP</name>
        <dbReference type="ChEBI" id="CHEBI:30616"/>
    </ligand>
</feature>
<proteinExistence type="inferred from homology"/>
<comment type="function">
    <text evidence="1">Plays an essential role in the initiation and regulation of chromosomal replication. ATP-DnaA binds to the origin of replication (oriC) to initiate formation of the DNA replication initiation complex once per cell cycle. Binds the DnaA box (a 9 base pair repeat at the origin) and separates the double-stranded (ds)DNA. Forms a right-handed helical filament on oriC DNA; dsDNA binds to the exterior of the filament while single-stranded (ss)DNA is stabiized in the filament's interior. The ATP-DnaA-oriC complex binds and stabilizes one strand of the AT-rich DNA unwinding element (DUE), permitting loading of DNA polymerase. After initiation quickly degrades to an ADP-DnaA complex that is not apt for DNA replication. Binds acidic phospholipids.</text>
</comment>
<comment type="subunit">
    <text evidence="1">Oligomerizes as a right-handed, spiral filament on DNA at oriC.</text>
</comment>
<comment type="subcellular location">
    <subcellularLocation>
        <location evidence="1">Cytoplasm</location>
    </subcellularLocation>
</comment>
<comment type="domain">
    <text evidence="1">Domain I is involved in oligomerization and binding regulators, domain II is flexibile and of varying length in different bacteria, domain III forms the AAA+ region, while domain IV binds dsDNA.</text>
</comment>
<comment type="similarity">
    <text evidence="1">Belongs to the DnaA family.</text>
</comment>
<sequence>MENISDLWNSALKELEKKVSKPSYETWLKSTTAHNLKKDVLTITAPNEFARDWLESHYSELISETLYDLTGAKLAIRFIIPQSQAEEEIDLPPAKPNAAQDDSNHLPQSMLNPKYTFDTFVIGSGNRFAHAASLAVAEAPAKAYNPLFIYGGVGLGKTHLMHAIGHYVIEHNPNAKVVYLSSEKFTNEFINSIRDNKAVDFRNKYRNVDVLLIDDIQFLAGKEQTQEEFFHTFNALHEESKQIVISSDRPPKEIPTLEDRLRSRFEWGLITDITPPDLETRIAILRKKAKAEGLDIPNEVMLYIANQIDSNIRELEGALIRVVAYSSLINKDINADLAAEALKDIIPNSKPKIISIYDIQKAVGDVYQVKLEDFKAKKRTKSVAFPRQIAMYLSRELTDSSLPKIGEEFGGRDHTTVIHAHEKISKLLKTDTQLQKQVEEINDILK</sequence>
<protein>
    <recommendedName>
        <fullName evidence="1">Chromosomal replication initiator protein DnaA</fullName>
    </recommendedName>
</protein>
<name>DNAA_BACAN</name>
<evidence type="ECO:0000255" key="1">
    <source>
        <dbReference type="HAMAP-Rule" id="MF_00377"/>
    </source>
</evidence>
<reference key="1">
    <citation type="journal article" date="2003" name="Nature">
        <title>The genome sequence of Bacillus anthracis Ames and comparison to closely related bacteria.</title>
        <authorList>
            <person name="Read T.D."/>
            <person name="Peterson S.N."/>
            <person name="Tourasse N.J."/>
            <person name="Baillie L.W."/>
            <person name="Paulsen I.T."/>
            <person name="Nelson K.E."/>
            <person name="Tettelin H."/>
            <person name="Fouts D.E."/>
            <person name="Eisen J.A."/>
            <person name="Gill S.R."/>
            <person name="Holtzapple E.K."/>
            <person name="Okstad O.A."/>
            <person name="Helgason E."/>
            <person name="Rilstone J."/>
            <person name="Wu M."/>
            <person name="Kolonay J.F."/>
            <person name="Beanan M.J."/>
            <person name="Dodson R.J."/>
            <person name="Brinkac L.M."/>
            <person name="Gwinn M.L."/>
            <person name="DeBoy R.T."/>
            <person name="Madpu R."/>
            <person name="Daugherty S.C."/>
            <person name="Durkin A.S."/>
            <person name="Haft D.H."/>
            <person name="Nelson W.C."/>
            <person name="Peterson J.D."/>
            <person name="Pop M."/>
            <person name="Khouri H.M."/>
            <person name="Radune D."/>
            <person name="Benton J.L."/>
            <person name="Mahamoud Y."/>
            <person name="Jiang L."/>
            <person name="Hance I.R."/>
            <person name="Weidman J.F."/>
            <person name="Berry K.J."/>
            <person name="Plaut R.D."/>
            <person name="Wolf A.M."/>
            <person name="Watkins K.L."/>
            <person name="Nierman W.C."/>
            <person name="Hazen A."/>
            <person name="Cline R.T."/>
            <person name="Redmond C."/>
            <person name="Thwaite J.E."/>
            <person name="White O."/>
            <person name="Salzberg S.L."/>
            <person name="Thomason B."/>
            <person name="Friedlander A.M."/>
            <person name="Koehler T.M."/>
            <person name="Hanna P.C."/>
            <person name="Kolstoe A.-B."/>
            <person name="Fraser C.M."/>
        </authorList>
    </citation>
    <scope>NUCLEOTIDE SEQUENCE [LARGE SCALE GENOMIC DNA]</scope>
    <source>
        <strain>Ames / isolate Porton</strain>
    </source>
</reference>
<reference key="2">
    <citation type="journal article" date="2009" name="J. Bacteriol.">
        <title>The complete genome sequence of Bacillus anthracis Ames 'Ancestor'.</title>
        <authorList>
            <person name="Ravel J."/>
            <person name="Jiang L."/>
            <person name="Stanley S.T."/>
            <person name="Wilson M.R."/>
            <person name="Decker R.S."/>
            <person name="Read T.D."/>
            <person name="Worsham P."/>
            <person name="Keim P.S."/>
            <person name="Salzberg S.L."/>
            <person name="Fraser-Liggett C.M."/>
            <person name="Rasko D.A."/>
        </authorList>
    </citation>
    <scope>NUCLEOTIDE SEQUENCE [LARGE SCALE GENOMIC DNA]</scope>
    <source>
        <strain>Ames ancestor</strain>
    </source>
</reference>
<reference key="3">
    <citation type="submission" date="2004-01" db="EMBL/GenBank/DDBJ databases">
        <title>Complete genome sequence of Bacillus anthracis Sterne.</title>
        <authorList>
            <person name="Brettin T.S."/>
            <person name="Bruce D."/>
            <person name="Challacombe J.F."/>
            <person name="Gilna P."/>
            <person name="Han C."/>
            <person name="Hill K."/>
            <person name="Hitchcock P."/>
            <person name="Jackson P."/>
            <person name="Keim P."/>
            <person name="Longmire J."/>
            <person name="Lucas S."/>
            <person name="Okinaka R."/>
            <person name="Richardson P."/>
            <person name="Rubin E."/>
            <person name="Tice H."/>
        </authorList>
    </citation>
    <scope>NUCLEOTIDE SEQUENCE [LARGE SCALE GENOMIC DNA]</scope>
    <source>
        <strain>Sterne</strain>
    </source>
</reference>
<organism>
    <name type="scientific">Bacillus anthracis</name>
    <dbReference type="NCBI Taxonomy" id="1392"/>
    <lineage>
        <taxon>Bacteria</taxon>
        <taxon>Bacillati</taxon>
        <taxon>Bacillota</taxon>
        <taxon>Bacilli</taxon>
        <taxon>Bacillales</taxon>
        <taxon>Bacillaceae</taxon>
        <taxon>Bacillus</taxon>
        <taxon>Bacillus cereus group</taxon>
    </lineage>
</organism>
<keyword id="KW-0067">ATP-binding</keyword>
<keyword id="KW-0963">Cytoplasm</keyword>
<keyword id="KW-0235">DNA replication</keyword>
<keyword id="KW-0238">DNA-binding</keyword>
<keyword id="KW-0446">Lipid-binding</keyword>
<keyword id="KW-0547">Nucleotide-binding</keyword>
<keyword id="KW-1185">Reference proteome</keyword>
<accession>Q81W35</accession>
<accession>Q6I538</accession>
<accession>Q6KYT1</accession>
<dbReference type="EMBL" id="AE016879">
    <property type="protein sequence ID" value="AAP24059.1"/>
    <property type="molecule type" value="Genomic_DNA"/>
</dbReference>
<dbReference type="EMBL" id="AE017334">
    <property type="protein sequence ID" value="AAT29079.1"/>
    <property type="molecule type" value="Genomic_DNA"/>
</dbReference>
<dbReference type="EMBL" id="AE017225">
    <property type="protein sequence ID" value="AAT52343.1"/>
    <property type="molecule type" value="Genomic_DNA"/>
</dbReference>
<dbReference type="RefSeq" id="NP_842573.1">
    <property type="nucleotide sequence ID" value="NC_003997.3"/>
</dbReference>
<dbReference type="RefSeq" id="WP_000428021.1">
    <property type="nucleotide sequence ID" value="NZ_WXXJ01000028.1"/>
</dbReference>
<dbReference type="RefSeq" id="YP_026292.1">
    <property type="nucleotide sequence ID" value="NC_005945.1"/>
</dbReference>
<dbReference type="SMR" id="Q81W35"/>
<dbReference type="STRING" id="261594.GBAA_0001"/>
<dbReference type="DNASU" id="1083812"/>
<dbReference type="GeneID" id="45020035"/>
<dbReference type="KEGG" id="ban:BA_0001"/>
<dbReference type="KEGG" id="bar:GBAA_0001"/>
<dbReference type="KEGG" id="bat:BAS0001"/>
<dbReference type="PATRIC" id="fig|198094.11.peg.1"/>
<dbReference type="eggNOG" id="COG0593">
    <property type="taxonomic scope" value="Bacteria"/>
</dbReference>
<dbReference type="HOGENOM" id="CLU_026910_3_1_9"/>
<dbReference type="OMA" id="DFIHFYQ"/>
<dbReference type="OrthoDB" id="9807019at2"/>
<dbReference type="Proteomes" id="UP000000427">
    <property type="component" value="Chromosome"/>
</dbReference>
<dbReference type="Proteomes" id="UP000000594">
    <property type="component" value="Chromosome"/>
</dbReference>
<dbReference type="GO" id="GO:0005737">
    <property type="term" value="C:cytoplasm"/>
    <property type="evidence" value="ECO:0007669"/>
    <property type="project" value="UniProtKB-SubCell"/>
</dbReference>
<dbReference type="GO" id="GO:0005886">
    <property type="term" value="C:plasma membrane"/>
    <property type="evidence" value="ECO:0007669"/>
    <property type="project" value="TreeGrafter"/>
</dbReference>
<dbReference type="GO" id="GO:0005524">
    <property type="term" value="F:ATP binding"/>
    <property type="evidence" value="ECO:0007669"/>
    <property type="project" value="UniProtKB-UniRule"/>
</dbReference>
<dbReference type="GO" id="GO:0016887">
    <property type="term" value="F:ATP hydrolysis activity"/>
    <property type="evidence" value="ECO:0007669"/>
    <property type="project" value="InterPro"/>
</dbReference>
<dbReference type="GO" id="GO:0003688">
    <property type="term" value="F:DNA replication origin binding"/>
    <property type="evidence" value="ECO:0007669"/>
    <property type="project" value="UniProtKB-UniRule"/>
</dbReference>
<dbReference type="GO" id="GO:0008289">
    <property type="term" value="F:lipid binding"/>
    <property type="evidence" value="ECO:0007669"/>
    <property type="project" value="UniProtKB-KW"/>
</dbReference>
<dbReference type="GO" id="GO:0006270">
    <property type="term" value="P:DNA replication initiation"/>
    <property type="evidence" value="ECO:0007669"/>
    <property type="project" value="UniProtKB-UniRule"/>
</dbReference>
<dbReference type="GO" id="GO:0006275">
    <property type="term" value="P:regulation of DNA replication"/>
    <property type="evidence" value="ECO:0007669"/>
    <property type="project" value="UniProtKB-UniRule"/>
</dbReference>
<dbReference type="CDD" id="cd00009">
    <property type="entry name" value="AAA"/>
    <property type="match status" value="1"/>
</dbReference>
<dbReference type="CDD" id="cd06571">
    <property type="entry name" value="Bac_DnaA_C"/>
    <property type="match status" value="1"/>
</dbReference>
<dbReference type="FunFam" id="1.10.1750.10:FF:000003">
    <property type="entry name" value="Chromosomal replication initiator protein DnaA"/>
    <property type="match status" value="1"/>
</dbReference>
<dbReference type="FunFam" id="1.10.8.60:FF:000003">
    <property type="entry name" value="Chromosomal replication initiator protein DnaA"/>
    <property type="match status" value="1"/>
</dbReference>
<dbReference type="FunFam" id="3.30.300.180:FF:000002">
    <property type="entry name" value="Chromosomal replication initiator protein DnaA"/>
    <property type="match status" value="1"/>
</dbReference>
<dbReference type="FunFam" id="3.40.50.300:FF:000150">
    <property type="entry name" value="Chromosomal replication initiator protein DnaA"/>
    <property type="match status" value="1"/>
</dbReference>
<dbReference type="Gene3D" id="1.10.1750.10">
    <property type="match status" value="1"/>
</dbReference>
<dbReference type="Gene3D" id="1.10.8.60">
    <property type="match status" value="1"/>
</dbReference>
<dbReference type="Gene3D" id="3.30.300.180">
    <property type="match status" value="1"/>
</dbReference>
<dbReference type="Gene3D" id="3.40.50.300">
    <property type="entry name" value="P-loop containing nucleotide triphosphate hydrolases"/>
    <property type="match status" value="1"/>
</dbReference>
<dbReference type="HAMAP" id="MF_00377">
    <property type="entry name" value="DnaA_bact"/>
    <property type="match status" value="1"/>
</dbReference>
<dbReference type="InterPro" id="IPR003593">
    <property type="entry name" value="AAA+_ATPase"/>
</dbReference>
<dbReference type="InterPro" id="IPR001957">
    <property type="entry name" value="Chromosome_initiator_DnaA"/>
</dbReference>
<dbReference type="InterPro" id="IPR020591">
    <property type="entry name" value="Chromosome_initiator_DnaA-like"/>
</dbReference>
<dbReference type="InterPro" id="IPR018312">
    <property type="entry name" value="Chromosome_initiator_DnaA_CS"/>
</dbReference>
<dbReference type="InterPro" id="IPR013159">
    <property type="entry name" value="DnaA_C"/>
</dbReference>
<dbReference type="InterPro" id="IPR013317">
    <property type="entry name" value="DnaA_dom"/>
</dbReference>
<dbReference type="InterPro" id="IPR024633">
    <property type="entry name" value="DnaA_N_dom"/>
</dbReference>
<dbReference type="InterPro" id="IPR038454">
    <property type="entry name" value="DnaA_N_sf"/>
</dbReference>
<dbReference type="InterPro" id="IPR027417">
    <property type="entry name" value="P-loop_NTPase"/>
</dbReference>
<dbReference type="InterPro" id="IPR010921">
    <property type="entry name" value="Trp_repressor/repl_initiator"/>
</dbReference>
<dbReference type="NCBIfam" id="TIGR00362">
    <property type="entry name" value="DnaA"/>
    <property type="match status" value="1"/>
</dbReference>
<dbReference type="NCBIfam" id="NF010686">
    <property type="entry name" value="PRK14086.1"/>
    <property type="match status" value="1"/>
</dbReference>
<dbReference type="PANTHER" id="PTHR30050">
    <property type="entry name" value="CHROMOSOMAL REPLICATION INITIATOR PROTEIN DNAA"/>
    <property type="match status" value="1"/>
</dbReference>
<dbReference type="PANTHER" id="PTHR30050:SF2">
    <property type="entry name" value="CHROMOSOMAL REPLICATION INITIATOR PROTEIN DNAA"/>
    <property type="match status" value="1"/>
</dbReference>
<dbReference type="Pfam" id="PF00308">
    <property type="entry name" value="Bac_DnaA"/>
    <property type="match status" value="1"/>
</dbReference>
<dbReference type="Pfam" id="PF08299">
    <property type="entry name" value="Bac_DnaA_C"/>
    <property type="match status" value="1"/>
</dbReference>
<dbReference type="Pfam" id="PF11638">
    <property type="entry name" value="DnaA_N"/>
    <property type="match status" value="1"/>
</dbReference>
<dbReference type="PRINTS" id="PR00051">
    <property type="entry name" value="DNAA"/>
</dbReference>
<dbReference type="SMART" id="SM00382">
    <property type="entry name" value="AAA"/>
    <property type="match status" value="1"/>
</dbReference>
<dbReference type="SMART" id="SM00760">
    <property type="entry name" value="Bac_DnaA_C"/>
    <property type="match status" value="1"/>
</dbReference>
<dbReference type="SUPFAM" id="SSF52540">
    <property type="entry name" value="P-loop containing nucleoside triphosphate hydrolases"/>
    <property type="match status" value="1"/>
</dbReference>
<dbReference type="SUPFAM" id="SSF48295">
    <property type="entry name" value="TrpR-like"/>
    <property type="match status" value="1"/>
</dbReference>
<dbReference type="PROSITE" id="PS01008">
    <property type="entry name" value="DNAA"/>
    <property type="match status" value="1"/>
</dbReference>
<gene>
    <name evidence="1" type="primary">dnaA</name>
    <name type="ordered locus">BA_0001</name>
    <name type="ordered locus">GBAA_0001</name>
    <name type="ordered locus">BAS0001</name>
</gene>